<protein>
    <recommendedName>
        <fullName evidence="1">Aspartyl/glutamyl-tRNA(Asn/Gln) amidotransferase subunit C</fullName>
        <shortName evidence="1">Asp/Glu-ADT subunit C</shortName>
        <ecNumber evidence="1">6.3.5.-</ecNumber>
    </recommendedName>
</protein>
<reference key="1">
    <citation type="journal article" date="2009" name="J. Bacteriol.">
        <title>Genome sequences of three Agrobacterium biovars help elucidate the evolution of multichromosome genomes in bacteria.</title>
        <authorList>
            <person name="Slater S.C."/>
            <person name="Goldman B.S."/>
            <person name="Goodner B."/>
            <person name="Setubal J.C."/>
            <person name="Farrand S.K."/>
            <person name="Nester E.W."/>
            <person name="Burr T.J."/>
            <person name="Banta L."/>
            <person name="Dickerman A.W."/>
            <person name="Paulsen I."/>
            <person name="Otten L."/>
            <person name="Suen G."/>
            <person name="Welch R."/>
            <person name="Almeida N.F."/>
            <person name="Arnold F."/>
            <person name="Burton O.T."/>
            <person name="Du Z."/>
            <person name="Ewing A."/>
            <person name="Godsy E."/>
            <person name="Heisel S."/>
            <person name="Houmiel K.L."/>
            <person name="Jhaveri J."/>
            <person name="Lu J."/>
            <person name="Miller N.M."/>
            <person name="Norton S."/>
            <person name="Chen Q."/>
            <person name="Phoolcharoen W."/>
            <person name="Ohlin V."/>
            <person name="Ondrusek D."/>
            <person name="Pride N."/>
            <person name="Stricklin S.L."/>
            <person name="Sun J."/>
            <person name="Wheeler C."/>
            <person name="Wilson L."/>
            <person name="Zhu H."/>
            <person name="Wood D.W."/>
        </authorList>
    </citation>
    <scope>NUCLEOTIDE SEQUENCE [LARGE SCALE GENOMIC DNA]</scope>
    <source>
        <strain>K84 / ATCC BAA-868</strain>
    </source>
</reference>
<organism>
    <name type="scientific">Rhizobium rhizogenes (strain K84 / ATCC BAA-868)</name>
    <name type="common">Agrobacterium radiobacter</name>
    <dbReference type="NCBI Taxonomy" id="311403"/>
    <lineage>
        <taxon>Bacteria</taxon>
        <taxon>Pseudomonadati</taxon>
        <taxon>Pseudomonadota</taxon>
        <taxon>Alphaproteobacteria</taxon>
        <taxon>Hyphomicrobiales</taxon>
        <taxon>Rhizobiaceae</taxon>
        <taxon>Rhizobium/Agrobacterium group</taxon>
        <taxon>Rhizobium</taxon>
    </lineage>
</organism>
<evidence type="ECO:0000255" key="1">
    <source>
        <dbReference type="HAMAP-Rule" id="MF_00122"/>
    </source>
</evidence>
<gene>
    <name evidence="1" type="primary">gatC</name>
    <name type="ordered locus">Arad_1908</name>
</gene>
<proteinExistence type="inferred from homology"/>
<name>GATC_RHIR8</name>
<accession>B9JDM9</accession>
<dbReference type="EC" id="6.3.5.-" evidence="1"/>
<dbReference type="EMBL" id="CP000628">
    <property type="protein sequence ID" value="ACM26230.1"/>
    <property type="molecule type" value="Genomic_DNA"/>
</dbReference>
<dbReference type="RefSeq" id="WP_007692014.1">
    <property type="nucleotide sequence ID" value="NC_011985.1"/>
</dbReference>
<dbReference type="SMR" id="B9JDM9"/>
<dbReference type="STRING" id="311403.Arad_1908"/>
<dbReference type="GeneID" id="86848114"/>
<dbReference type="KEGG" id="ara:Arad_1908"/>
<dbReference type="eggNOG" id="COG0721">
    <property type="taxonomic scope" value="Bacteria"/>
</dbReference>
<dbReference type="HOGENOM" id="CLU_105899_2_0_5"/>
<dbReference type="Proteomes" id="UP000001600">
    <property type="component" value="Chromosome 1"/>
</dbReference>
<dbReference type="GO" id="GO:0050566">
    <property type="term" value="F:asparaginyl-tRNA synthase (glutamine-hydrolyzing) activity"/>
    <property type="evidence" value="ECO:0007669"/>
    <property type="project" value="RHEA"/>
</dbReference>
<dbReference type="GO" id="GO:0005524">
    <property type="term" value="F:ATP binding"/>
    <property type="evidence" value="ECO:0007669"/>
    <property type="project" value="UniProtKB-KW"/>
</dbReference>
<dbReference type="GO" id="GO:0050567">
    <property type="term" value="F:glutaminyl-tRNA synthase (glutamine-hydrolyzing) activity"/>
    <property type="evidence" value="ECO:0007669"/>
    <property type="project" value="UniProtKB-UniRule"/>
</dbReference>
<dbReference type="GO" id="GO:0070681">
    <property type="term" value="P:glutaminyl-tRNAGln biosynthesis via transamidation"/>
    <property type="evidence" value="ECO:0007669"/>
    <property type="project" value="TreeGrafter"/>
</dbReference>
<dbReference type="GO" id="GO:0006450">
    <property type="term" value="P:regulation of translational fidelity"/>
    <property type="evidence" value="ECO:0007669"/>
    <property type="project" value="InterPro"/>
</dbReference>
<dbReference type="GO" id="GO:0006412">
    <property type="term" value="P:translation"/>
    <property type="evidence" value="ECO:0007669"/>
    <property type="project" value="UniProtKB-UniRule"/>
</dbReference>
<dbReference type="Gene3D" id="1.10.20.60">
    <property type="entry name" value="Glu-tRNAGln amidotransferase C subunit, N-terminal domain"/>
    <property type="match status" value="1"/>
</dbReference>
<dbReference type="HAMAP" id="MF_00122">
    <property type="entry name" value="GatC"/>
    <property type="match status" value="1"/>
</dbReference>
<dbReference type="InterPro" id="IPR036113">
    <property type="entry name" value="Asp/Glu-ADT_sf_sub_c"/>
</dbReference>
<dbReference type="InterPro" id="IPR003837">
    <property type="entry name" value="GatC"/>
</dbReference>
<dbReference type="NCBIfam" id="TIGR00135">
    <property type="entry name" value="gatC"/>
    <property type="match status" value="1"/>
</dbReference>
<dbReference type="PANTHER" id="PTHR15004">
    <property type="entry name" value="GLUTAMYL-TRNA(GLN) AMIDOTRANSFERASE SUBUNIT C, MITOCHONDRIAL"/>
    <property type="match status" value="1"/>
</dbReference>
<dbReference type="PANTHER" id="PTHR15004:SF0">
    <property type="entry name" value="GLUTAMYL-TRNA(GLN) AMIDOTRANSFERASE SUBUNIT C, MITOCHONDRIAL"/>
    <property type="match status" value="1"/>
</dbReference>
<dbReference type="Pfam" id="PF02686">
    <property type="entry name" value="GatC"/>
    <property type="match status" value="1"/>
</dbReference>
<dbReference type="SUPFAM" id="SSF141000">
    <property type="entry name" value="Glu-tRNAGln amidotransferase C subunit"/>
    <property type="match status" value="1"/>
</dbReference>
<feature type="chain" id="PRO_1000122546" description="Aspartyl/glutamyl-tRNA(Asn/Gln) amidotransferase subunit C">
    <location>
        <begin position="1"/>
        <end position="95"/>
    </location>
</feature>
<sequence>MSVDLATVKRVAHLARIAVNEDEAQRMVGELNGMLGFVEQLSEVNVDGVEAMTSVTPMAMKKRTDEVTDGSKAADIVANAPNTDQNFFLVPKVVE</sequence>
<keyword id="KW-0067">ATP-binding</keyword>
<keyword id="KW-0436">Ligase</keyword>
<keyword id="KW-0547">Nucleotide-binding</keyword>
<keyword id="KW-0648">Protein biosynthesis</keyword>
<comment type="function">
    <text evidence="1">Allows the formation of correctly charged Asn-tRNA(Asn) or Gln-tRNA(Gln) through the transamidation of misacylated Asp-tRNA(Asn) or Glu-tRNA(Gln) in organisms which lack either or both of asparaginyl-tRNA or glutaminyl-tRNA synthetases. The reaction takes place in the presence of glutamine and ATP through an activated phospho-Asp-tRNA(Asn) or phospho-Glu-tRNA(Gln).</text>
</comment>
<comment type="catalytic activity">
    <reaction evidence="1">
        <text>L-glutamyl-tRNA(Gln) + L-glutamine + ATP + H2O = L-glutaminyl-tRNA(Gln) + L-glutamate + ADP + phosphate + H(+)</text>
        <dbReference type="Rhea" id="RHEA:17521"/>
        <dbReference type="Rhea" id="RHEA-COMP:9681"/>
        <dbReference type="Rhea" id="RHEA-COMP:9684"/>
        <dbReference type="ChEBI" id="CHEBI:15377"/>
        <dbReference type="ChEBI" id="CHEBI:15378"/>
        <dbReference type="ChEBI" id="CHEBI:29985"/>
        <dbReference type="ChEBI" id="CHEBI:30616"/>
        <dbReference type="ChEBI" id="CHEBI:43474"/>
        <dbReference type="ChEBI" id="CHEBI:58359"/>
        <dbReference type="ChEBI" id="CHEBI:78520"/>
        <dbReference type="ChEBI" id="CHEBI:78521"/>
        <dbReference type="ChEBI" id="CHEBI:456216"/>
    </reaction>
</comment>
<comment type="catalytic activity">
    <reaction evidence="1">
        <text>L-aspartyl-tRNA(Asn) + L-glutamine + ATP + H2O = L-asparaginyl-tRNA(Asn) + L-glutamate + ADP + phosphate + 2 H(+)</text>
        <dbReference type="Rhea" id="RHEA:14513"/>
        <dbReference type="Rhea" id="RHEA-COMP:9674"/>
        <dbReference type="Rhea" id="RHEA-COMP:9677"/>
        <dbReference type="ChEBI" id="CHEBI:15377"/>
        <dbReference type="ChEBI" id="CHEBI:15378"/>
        <dbReference type="ChEBI" id="CHEBI:29985"/>
        <dbReference type="ChEBI" id="CHEBI:30616"/>
        <dbReference type="ChEBI" id="CHEBI:43474"/>
        <dbReference type="ChEBI" id="CHEBI:58359"/>
        <dbReference type="ChEBI" id="CHEBI:78515"/>
        <dbReference type="ChEBI" id="CHEBI:78516"/>
        <dbReference type="ChEBI" id="CHEBI:456216"/>
    </reaction>
</comment>
<comment type="subunit">
    <text evidence="1">Heterotrimer of A, B and C subunits.</text>
</comment>
<comment type="similarity">
    <text evidence="1">Belongs to the GatC family.</text>
</comment>